<comment type="function">
    <text evidence="1">Tetrapolymerization of the monopyrrole PBG into the hydroxymethylbilane pre-uroporphyrinogen in several discrete steps.</text>
</comment>
<comment type="catalytic activity">
    <reaction evidence="1">
        <text>4 porphobilinogen + H2O = hydroxymethylbilane + 4 NH4(+)</text>
        <dbReference type="Rhea" id="RHEA:13185"/>
        <dbReference type="ChEBI" id="CHEBI:15377"/>
        <dbReference type="ChEBI" id="CHEBI:28938"/>
        <dbReference type="ChEBI" id="CHEBI:57845"/>
        <dbReference type="ChEBI" id="CHEBI:58126"/>
        <dbReference type="EC" id="2.5.1.61"/>
    </reaction>
</comment>
<comment type="cofactor">
    <cofactor evidence="1">
        <name>dipyrromethane</name>
        <dbReference type="ChEBI" id="CHEBI:60342"/>
    </cofactor>
    <text evidence="1">Binds 1 dipyrromethane group covalently.</text>
</comment>
<comment type="pathway">
    <text evidence="1">Porphyrin-containing compound metabolism; protoporphyrin-IX biosynthesis; coproporphyrinogen-III from 5-aminolevulinate: step 2/4.</text>
</comment>
<comment type="subunit">
    <text evidence="1">Monomer.</text>
</comment>
<comment type="miscellaneous">
    <text evidence="1">The porphobilinogen subunits are added to the dipyrromethane group.</text>
</comment>
<comment type="similarity">
    <text evidence="1">Belongs to the HMBS family.</text>
</comment>
<feature type="chain" id="PRO_1000114177" description="Porphobilinogen deaminase">
    <location>
        <begin position="1"/>
        <end position="313"/>
    </location>
</feature>
<feature type="modified residue" description="S-(dipyrrolylmethanemethyl)cysteine" evidence="1">
    <location>
        <position position="242"/>
    </location>
</feature>
<gene>
    <name evidence="1" type="primary">hemC</name>
    <name type="ordered locus">SeSA_A4151</name>
</gene>
<evidence type="ECO:0000255" key="1">
    <source>
        <dbReference type="HAMAP-Rule" id="MF_00260"/>
    </source>
</evidence>
<protein>
    <recommendedName>
        <fullName evidence="1">Porphobilinogen deaminase</fullName>
        <shortName evidence="1">PBG</shortName>
        <ecNumber evidence="1">2.5.1.61</ecNumber>
    </recommendedName>
    <alternativeName>
        <fullName evidence="1">Hydroxymethylbilane synthase</fullName>
        <shortName evidence="1">HMBS</shortName>
    </alternativeName>
    <alternativeName>
        <fullName evidence="1">Pre-uroporphyrinogen synthase</fullName>
    </alternativeName>
</protein>
<proteinExistence type="inferred from homology"/>
<dbReference type="EC" id="2.5.1.61" evidence="1"/>
<dbReference type="EMBL" id="CP001127">
    <property type="protein sequence ID" value="ACF89511.1"/>
    <property type="molecule type" value="Genomic_DNA"/>
</dbReference>
<dbReference type="RefSeq" id="WP_001521319.1">
    <property type="nucleotide sequence ID" value="NC_011094.1"/>
</dbReference>
<dbReference type="SMR" id="B4TNV3"/>
<dbReference type="KEGG" id="sew:SeSA_A4151"/>
<dbReference type="HOGENOM" id="CLU_019704_0_2_6"/>
<dbReference type="UniPathway" id="UPA00251">
    <property type="reaction ID" value="UER00319"/>
</dbReference>
<dbReference type="Proteomes" id="UP000001865">
    <property type="component" value="Chromosome"/>
</dbReference>
<dbReference type="GO" id="GO:0005737">
    <property type="term" value="C:cytoplasm"/>
    <property type="evidence" value="ECO:0007669"/>
    <property type="project" value="TreeGrafter"/>
</dbReference>
<dbReference type="GO" id="GO:0004418">
    <property type="term" value="F:hydroxymethylbilane synthase activity"/>
    <property type="evidence" value="ECO:0007669"/>
    <property type="project" value="UniProtKB-UniRule"/>
</dbReference>
<dbReference type="GO" id="GO:0006782">
    <property type="term" value="P:protoporphyrinogen IX biosynthetic process"/>
    <property type="evidence" value="ECO:0007669"/>
    <property type="project" value="UniProtKB-UniRule"/>
</dbReference>
<dbReference type="CDD" id="cd13646">
    <property type="entry name" value="PBP2_EcHMBS_like"/>
    <property type="match status" value="1"/>
</dbReference>
<dbReference type="FunFam" id="3.30.160.40:FF:000002">
    <property type="entry name" value="Porphobilinogen deaminase"/>
    <property type="match status" value="1"/>
</dbReference>
<dbReference type="FunFam" id="3.40.190.10:FF:000004">
    <property type="entry name" value="Porphobilinogen deaminase"/>
    <property type="match status" value="1"/>
</dbReference>
<dbReference type="FunFam" id="3.40.190.10:FF:000005">
    <property type="entry name" value="Porphobilinogen deaminase"/>
    <property type="match status" value="1"/>
</dbReference>
<dbReference type="Gene3D" id="3.40.190.10">
    <property type="entry name" value="Periplasmic binding protein-like II"/>
    <property type="match status" value="2"/>
</dbReference>
<dbReference type="Gene3D" id="3.30.160.40">
    <property type="entry name" value="Porphobilinogen deaminase, C-terminal domain"/>
    <property type="match status" value="1"/>
</dbReference>
<dbReference type="HAMAP" id="MF_00260">
    <property type="entry name" value="Porphobil_deam"/>
    <property type="match status" value="1"/>
</dbReference>
<dbReference type="InterPro" id="IPR000860">
    <property type="entry name" value="HemC"/>
</dbReference>
<dbReference type="InterPro" id="IPR022419">
    <property type="entry name" value="Porphobilin_deaminase_cofac_BS"/>
</dbReference>
<dbReference type="InterPro" id="IPR022417">
    <property type="entry name" value="Porphobilin_deaminase_N"/>
</dbReference>
<dbReference type="InterPro" id="IPR022418">
    <property type="entry name" value="Porphobilinogen_deaminase_C"/>
</dbReference>
<dbReference type="InterPro" id="IPR036803">
    <property type="entry name" value="Porphobilinogen_deaminase_C_sf"/>
</dbReference>
<dbReference type="NCBIfam" id="TIGR00212">
    <property type="entry name" value="hemC"/>
    <property type="match status" value="1"/>
</dbReference>
<dbReference type="PANTHER" id="PTHR11557">
    <property type="entry name" value="PORPHOBILINOGEN DEAMINASE"/>
    <property type="match status" value="1"/>
</dbReference>
<dbReference type="PANTHER" id="PTHR11557:SF0">
    <property type="entry name" value="PORPHOBILINOGEN DEAMINASE"/>
    <property type="match status" value="1"/>
</dbReference>
<dbReference type="Pfam" id="PF01379">
    <property type="entry name" value="Porphobil_deam"/>
    <property type="match status" value="1"/>
</dbReference>
<dbReference type="Pfam" id="PF03900">
    <property type="entry name" value="Porphobil_deamC"/>
    <property type="match status" value="1"/>
</dbReference>
<dbReference type="PIRSF" id="PIRSF001438">
    <property type="entry name" value="4pyrrol_synth_OHMeBilane_synth"/>
    <property type="match status" value="1"/>
</dbReference>
<dbReference type="PRINTS" id="PR00151">
    <property type="entry name" value="PORPHBDMNASE"/>
</dbReference>
<dbReference type="SUPFAM" id="SSF53850">
    <property type="entry name" value="Periplasmic binding protein-like II"/>
    <property type="match status" value="1"/>
</dbReference>
<dbReference type="SUPFAM" id="SSF54782">
    <property type="entry name" value="Porphobilinogen deaminase (hydroxymethylbilane synthase), C-terminal domain"/>
    <property type="match status" value="1"/>
</dbReference>
<dbReference type="PROSITE" id="PS00533">
    <property type="entry name" value="PORPHOBILINOGEN_DEAM"/>
    <property type="match status" value="1"/>
</dbReference>
<keyword id="KW-0627">Porphyrin biosynthesis</keyword>
<keyword id="KW-0808">Transferase</keyword>
<organism>
    <name type="scientific">Salmonella schwarzengrund (strain CVM19633)</name>
    <dbReference type="NCBI Taxonomy" id="439843"/>
    <lineage>
        <taxon>Bacteria</taxon>
        <taxon>Pseudomonadati</taxon>
        <taxon>Pseudomonadota</taxon>
        <taxon>Gammaproteobacteria</taxon>
        <taxon>Enterobacterales</taxon>
        <taxon>Enterobacteriaceae</taxon>
        <taxon>Salmonella</taxon>
    </lineage>
</organism>
<sequence>MLDNVLRIATRQSPLALWQAHYVKDALMATHPGLTVELVPMVTRGDVILDTPLAKVGGKGLFVKELEIALLEKRADIAVHSMKDVPVAFPDGLGLVTICEREDPRDAFVSNKYHSLDDLPAGSIVGTSSLRRQCQLAERRPDLIIRSLRGNVGTRLGKLDNGDYDAIILAVAGLKRLGLESRIRTALPPDVSLPAVGQGAVGIECRLDDARTQALLAPLNHSQTALRVTAERAMNTRLEGGCQVPIGSYAEIINGEIWLRALVGAPDGSVMVRGERRGSPEQAEQMGISLAEELLENGARAILTEVYNGETPA</sequence>
<name>HEM3_SALSV</name>
<reference key="1">
    <citation type="journal article" date="2011" name="J. Bacteriol.">
        <title>Comparative genomics of 28 Salmonella enterica isolates: evidence for CRISPR-mediated adaptive sublineage evolution.</title>
        <authorList>
            <person name="Fricke W.F."/>
            <person name="Mammel M.K."/>
            <person name="McDermott P.F."/>
            <person name="Tartera C."/>
            <person name="White D.G."/>
            <person name="Leclerc J.E."/>
            <person name="Ravel J."/>
            <person name="Cebula T.A."/>
        </authorList>
    </citation>
    <scope>NUCLEOTIDE SEQUENCE [LARGE SCALE GENOMIC DNA]</scope>
    <source>
        <strain>CVM19633</strain>
    </source>
</reference>
<accession>B4TNV3</accession>